<comment type="function">
    <molecule>Minor capsid readthrough protein</molecule>
    <text evidence="1 2 3">Minor component of the viral capsid involved in aphid transmission and virus accumulation in the host (By similarity). Required for the virus to move through the aphid (By similarity). The RTD domain of the protein is exposed on the surface of the particle and determines the vector specificity and intestinal tropism in the aphid (By similarity). This domain might also determine the limitation of the virus to the host phloem (By similarity).</text>
</comment>
<comment type="function">
    <molecule>Isoform P7</molecule>
    <text evidence="3">Participates, together with the proteins P0 and P1, in the inhibition of the induction of aphid-induced host phytohormones. This could play a role in the attraction to the infected plants by aphids.</text>
</comment>
<comment type="subcellular location">
    <molecule>Minor capsid readthrough protein</molecule>
    <subcellularLocation>
        <location evidence="3">Virion</location>
    </subcellularLocation>
    <subcellularLocation>
        <location evidence="3">Host cell junction</location>
        <location evidence="3">Host plasmodesma</location>
    </subcellularLocation>
    <subcellularLocation>
        <location evidence="3">Host periplasm</location>
    </subcellularLocation>
</comment>
<comment type="subcellular location">
    <molecule>Cleaved product</molecule>
    <subcellularLocation>
        <location evidence="3">Virion</location>
    </subcellularLocation>
</comment>
<comment type="alternative products">
    <event type="alternative promoter"/>
    <isoform>
        <id>P11626-1</id>
        <name>Readthrough protein P3-RTD</name>
        <sequence type="displayed"/>
    </isoform>
    <isoform>
        <id>P11626-2</id>
        <name>P7</name>
        <sequence type="described" ref="VSP_038674"/>
    </isoform>
</comment>
<comment type="domain">
    <molecule>Isoform Readthrough protein P3-RTD</molecule>
    <text evidence="1 2 3">The N-terminus is highly basic like those of many plant virus capsid proteins. These regions may be involved in protein-RNA interaction (By similarity). The RTD N-terminus is responsible for aphid transmission and aphid endosymbiont interaction (By similarity). The readthrough domain is required for transport of virus through membranes of the aphid salivary glands (By similarity).</text>
</comment>
<comment type="PTM">
    <molecule>Isoform Readthrough protein P3-RTD</molecule>
    <text evidence="3">In virus particles, more than 200 amino acids are proteolytically cleaved releasing the C-terminus part of the RTD domain. The cleaved product remains attached to the virus particle.</text>
</comment>
<comment type="miscellaneous">
    <molecule>Isoform Readthrough protein P3-RTD</molecule>
    <text evidence="3">This protein is translated as a fusion protein by episodic readthrough of the major coat protein termination codon. It is composed of the major capsid protein fused to a long C-terminal extension called the readthrough domain (RTD). Readthrough of the terminator codon TAG occurs between the codons for 208-Lys and 210-Val.</text>
</comment>
<comment type="similarity">
    <text evidence="5">Belongs to the luteoviruses readthrough protein family.</text>
</comment>
<comment type="sequence caution" evidence="5">
    <conflict type="miscellaneous discrepancy">
        <sequence resource="EMBL-CDS" id="CAA68799"/>
    </conflict>
    <text>Readthrough of an in-frame TAG stop codon in position 209 translated as Tyr.</text>
</comment>
<organismHost>
    <name type="scientific">Solanum tuberosum</name>
    <name type="common">Potato</name>
    <dbReference type="NCBI Taxonomy" id="4113"/>
</organismHost>
<keyword id="KW-0877">Alternative promoter usage</keyword>
<keyword id="KW-0167">Capsid protein</keyword>
<keyword id="KW-1031">Host cell junction</keyword>
<keyword id="KW-1049">Host periplasm</keyword>
<keyword id="KW-1159">RNA suppression of termination</keyword>
<keyword id="KW-0946">Virion</keyword>
<evidence type="ECO:0000250" key="1">
    <source>
        <dbReference type="UniProtKB" id="P09514"/>
    </source>
</evidence>
<evidence type="ECO:0000250" key="2">
    <source>
        <dbReference type="UniProtKB" id="P09516"/>
    </source>
</evidence>
<evidence type="ECO:0000250" key="3">
    <source>
        <dbReference type="UniProtKB" id="P17525"/>
    </source>
</evidence>
<evidence type="ECO:0000256" key="4">
    <source>
        <dbReference type="SAM" id="MobiDB-lite"/>
    </source>
</evidence>
<evidence type="ECO:0000305" key="5"/>
<dbReference type="EMBL" id="Y07496">
    <property type="protein sequence ID" value="CAA68799.1"/>
    <property type="status" value="ALT_SEQ"/>
    <property type="molecule type" value="Genomic_RNA"/>
</dbReference>
<dbReference type="PIR" id="S03551">
    <property type="entry name" value="S03551"/>
</dbReference>
<dbReference type="SMR" id="P11626"/>
<dbReference type="Proteomes" id="UP000000474">
    <property type="component" value="Genome"/>
</dbReference>
<dbReference type="GO" id="GO:0044229">
    <property type="term" value="C:host cell periplasmic space"/>
    <property type="evidence" value="ECO:0007669"/>
    <property type="project" value="UniProtKB-SubCell"/>
</dbReference>
<dbReference type="GO" id="GO:0044219">
    <property type="term" value="C:host cell plasmodesma"/>
    <property type="evidence" value="ECO:0007669"/>
    <property type="project" value="UniProtKB-SubCell"/>
</dbReference>
<dbReference type="GO" id="GO:0019028">
    <property type="term" value="C:viral capsid"/>
    <property type="evidence" value="ECO:0007669"/>
    <property type="project" value="UniProtKB-KW"/>
</dbReference>
<dbReference type="GO" id="GO:0005198">
    <property type="term" value="F:structural molecule activity"/>
    <property type="evidence" value="ECO:0007669"/>
    <property type="project" value="InterPro"/>
</dbReference>
<dbReference type="Gene3D" id="2.60.120.20">
    <property type="match status" value="1"/>
</dbReference>
<dbReference type="InterPro" id="IPR001517">
    <property type="entry name" value="Luteo_coat"/>
</dbReference>
<dbReference type="InterPro" id="IPR002929">
    <property type="entry name" value="PLrV_ORF5"/>
</dbReference>
<dbReference type="InterPro" id="IPR029053">
    <property type="entry name" value="Viral_coat"/>
</dbReference>
<dbReference type="Pfam" id="PF00894">
    <property type="entry name" value="Luteo_coat"/>
    <property type="match status" value="1"/>
</dbReference>
<dbReference type="Pfam" id="PF01690">
    <property type="entry name" value="PLRV_ORF5"/>
    <property type="match status" value="1"/>
</dbReference>
<dbReference type="PRINTS" id="PR00910">
    <property type="entry name" value="LVIRUSORF6"/>
</dbReference>
<reference key="1">
    <citation type="journal article" date="1989" name="FEBS Lett.">
        <title>Nucleotide sequence and organization of potato leafroll virus genomic RNA.</title>
        <authorList>
            <person name="van der Wilk F."/>
            <person name="Huisman M.J."/>
            <person name="Cornelissen B.J.C."/>
            <person name="Huttinga H."/>
            <person name="Goldbach R.W."/>
        </authorList>
    </citation>
    <scope>NUCLEOTIDE SEQUENCE [GENOMIC RNA]</scope>
</reference>
<name>MCAPS_PLRVW</name>
<gene>
    <name type="ORF">ORF3/ORF5</name>
</gene>
<sequence length="716" mass="79759">MSTVVVKGNVNGGVQQPRRRRRQSLRRRANRVQPVVMVTAPGQPRRRRRRRGGNRRSRRTGVPRGRGSSETFVFTKDNLMGNSQGSFTFGPSLSDCPAFKDGILKAYHEYKITSILLQFVSEASSTSSGSIAYELDPHCKVSSLQSYVNQFQIPQGGAKTYQARMINGVEWHDSSEDQCRILWKGNGKSSDTAGSFRVTIRVALQNPKYDSGPEPGPSPQPTPTPTPQKHERFIAYVGIPMLTIQARESDDQIILGSLGSQRMKYIEDENQNYTNVSSEYYSQSSMQAVPMYYFNVPKGQWSVDISCEGYQPTSSTSDPNRGRSDGMIAYSNADSDYWNVGEADGVKISKLRNDNTYRQGHPELEINSCHFREGQLLERDATISFHVEAPTDGRFFLVGPAIQKTAKYNYTISYGDWTDRDMELGLITVVLDEHLEGTGSANRVRRPPREGHTYMASPREPEGKPVGNKPRDETPIQTQERQPDQTPSDDVSDAGSVNSGGSTESLQLEFGANSDSTYDATVDGTDWPRIPPPRHPPEPRVSGNSRTVTDFSPKADLLENWDAKHFDPGYSKEDVAAATIIAHGSIQDGRSMLEKREENVKNKTSSWKPPLPKAVSPAIAKLRSIRKSQPLEGGTLKKDATDGVSSIGSGSLTGGTLKRKETIEERLLQTLTTEQRLWYENLKKTNPLAATQWLFEYQPPPQVDRNLAEKPFQGRK</sequence>
<protein>
    <recommendedName>
        <fullName>Readthrough protein P3-RTD</fullName>
    </recommendedName>
    <alternativeName>
        <fullName>P3-P5 readthrough protein</fullName>
    </alternativeName>
    <alternativeName>
        <fullName>P74</fullName>
    </alternativeName>
    <alternativeName>
        <fullName>Readthrough protein</fullName>
        <shortName>RT protein</shortName>
    </alternativeName>
    <component>
        <recommendedName>
            <fullName evidence="1">Minor capsid readthrough protein</fullName>
            <shortName evidence="1">Minor capsid RT protein</shortName>
        </recommendedName>
        <alternativeName>
            <fullName>54 kDa protein</fullName>
        </alternativeName>
    </component>
    <component>
        <recommendedName>
            <fullName evidence="5">Cleaved product</fullName>
        </recommendedName>
    </component>
</protein>
<organism>
    <name type="scientific">Potato leafroll virus (strain Potato/Netherlands/Wageningen/1989)</name>
    <name type="common">PLrV</name>
    <dbReference type="NCBI Taxonomy" id="12048"/>
    <lineage>
        <taxon>Viruses</taxon>
        <taxon>Riboviria</taxon>
        <taxon>Orthornavirae</taxon>
        <taxon>Pisuviricota</taxon>
        <taxon>Pisoniviricetes</taxon>
        <taxon>Sobelivirales</taxon>
        <taxon>Solemoviridae</taxon>
        <taxon>Polerovirus</taxon>
        <taxon>Potato leafroll virus</taxon>
    </lineage>
</organism>
<feature type="chain" id="PRO_0000222430" description="Readthrough protein P3-RTD">
    <location>
        <begin position="1"/>
        <end position="716"/>
    </location>
</feature>
<feature type="chain" id="PRO_0000455347" description="Minor capsid readthrough protein">
    <location>
        <begin position="1"/>
        <end position="443" status="uncertain"/>
    </location>
</feature>
<feature type="chain" id="PRO_0000455348" description="Cleaved product">
    <location>
        <begin position="444" status="uncertain"/>
        <end position="716"/>
    </location>
</feature>
<feature type="region of interest" description="Disordered" evidence="4">
    <location>
        <begin position="1"/>
        <end position="69"/>
    </location>
</feature>
<feature type="region of interest" description="Disordered" evidence="4">
    <location>
        <begin position="207"/>
        <end position="228"/>
    </location>
</feature>
<feature type="region of interest" description="Readthrough domain (RTD)">
    <location>
        <begin position="210"/>
        <end position="716"/>
    </location>
</feature>
<feature type="region of interest" description="Disordered" evidence="4">
    <location>
        <begin position="438"/>
        <end position="547"/>
    </location>
</feature>
<feature type="region of interest" description="Involved in the efficient long distance movement of the virus and the periplasmic subcellular location" evidence="3">
    <location>
        <begin position="694"/>
        <end position="698"/>
    </location>
</feature>
<feature type="compositionally biased region" description="Low complexity" evidence="4">
    <location>
        <begin position="1"/>
        <end position="16"/>
    </location>
</feature>
<feature type="compositionally biased region" description="Basic residues" evidence="4">
    <location>
        <begin position="17"/>
        <end position="30"/>
    </location>
</feature>
<feature type="compositionally biased region" description="Basic residues" evidence="4">
    <location>
        <begin position="44"/>
        <end position="61"/>
    </location>
</feature>
<feature type="compositionally biased region" description="Pro residues" evidence="4">
    <location>
        <begin position="214"/>
        <end position="226"/>
    </location>
</feature>
<feature type="compositionally biased region" description="Basic and acidic residues" evidence="4">
    <location>
        <begin position="459"/>
        <end position="474"/>
    </location>
</feature>
<feature type="compositionally biased region" description="Polar residues" evidence="4">
    <location>
        <begin position="475"/>
        <end position="506"/>
    </location>
</feature>
<feature type="site" description="Cleavage" evidence="1">
    <location>
        <begin position="443"/>
        <end position="444"/>
    </location>
</feature>
<feature type="splice variant" id="VSP_038674" description="In isoform P7." evidence="5">
    <location>
        <begin position="1"/>
        <end position="591"/>
    </location>
</feature>
<accession>P11626</accession>
<proteinExistence type="inferred from homology"/>